<keyword id="KW-0963">Cytoplasm</keyword>
<keyword id="KW-0274">FAD</keyword>
<keyword id="KW-0285">Flavoprotein</keyword>
<keyword id="KW-0520">NAD</keyword>
<keyword id="KW-0819">tRNA processing</keyword>
<sequence>MTHEFTESYDVIVIGAGHAGVEASLATSRMGCKTLLATINLDMLAFMPCNPSIGGSAKGIVVREIDALGGEMGKNIDKTYIQMKMLNTGKGPAVRALRAQADKSLYAREMKHTVEKQANLTLRQTMIDDILVEDGRVVGVLTATGQKFAAKAVVVTTGTALRGEIILGELKYSSGPNNSLASVTLADNLKKLGLEIGRFKTGTPPRVKASSINYDQTEIQPGDDKPNHFSFMSKDADYLKDQIPCWLTYTNQTSHDIINQNLYRAPMFSGIVKGVGPRYCPSIEDKIVRFADKERHQLFLEPEGRDTEEVYVQGLSTSLPEDVQKDLIHSIKGLEKAEMMRTGYAIEYDIVLPHQLRATLETKLISGLFTAGQTNGTSGYEEAAGQGLIAGINAALKVQGKSELILKRSDAYIGVMIDDLVTKGTLEPYRLLTSRAEYRLILRHDNADMRLTEIGRDIGLVDDERWKAFEIKKNQFDNELKRLNSIKLKPVKATNDRVQELGFKPLTDAMIAKEFMRRPEIDYATAVSFVGPAAEDLDAKIIELLETEIKYEGYIRKALDQVAKMKRMEEKRIPANIDWDAIDSIATEARQKFKKINPETIGQASRISGVNPADISILMIYLEGNGKAHRKY</sequence>
<comment type="function">
    <text evidence="1">NAD-binding protein involved in the addition of a carboxymethylaminomethyl (cmnm) group at the wobble position (U34) of certain tRNAs, forming tRNA-cmnm(5)s(2)U34.</text>
</comment>
<comment type="cofactor">
    <cofactor evidence="1">
        <name>FAD</name>
        <dbReference type="ChEBI" id="CHEBI:57692"/>
    </cofactor>
</comment>
<comment type="subunit">
    <text evidence="1">Homodimer. Heterotetramer of two MnmE and two MnmG subunits.</text>
</comment>
<comment type="subcellular location">
    <subcellularLocation>
        <location evidence="1">Cytoplasm</location>
    </subcellularLocation>
</comment>
<comment type="similarity">
    <text evidence="1">Belongs to the MnmG family.</text>
</comment>
<dbReference type="EMBL" id="CP000003">
    <property type="protein sequence ID" value="AAT87991.1"/>
    <property type="molecule type" value="Genomic_DNA"/>
</dbReference>
<dbReference type="RefSeq" id="WP_011185100.1">
    <property type="nucleotide sequence ID" value="NC_006086.1"/>
</dbReference>
<dbReference type="SMR" id="Q5X9C2"/>
<dbReference type="KEGG" id="spa:M6_Spy1856"/>
<dbReference type="HOGENOM" id="CLU_007831_2_2_9"/>
<dbReference type="Proteomes" id="UP000001167">
    <property type="component" value="Chromosome"/>
</dbReference>
<dbReference type="GO" id="GO:0005829">
    <property type="term" value="C:cytosol"/>
    <property type="evidence" value="ECO:0007669"/>
    <property type="project" value="TreeGrafter"/>
</dbReference>
<dbReference type="GO" id="GO:0050660">
    <property type="term" value="F:flavin adenine dinucleotide binding"/>
    <property type="evidence" value="ECO:0007669"/>
    <property type="project" value="UniProtKB-UniRule"/>
</dbReference>
<dbReference type="GO" id="GO:0030488">
    <property type="term" value="P:tRNA methylation"/>
    <property type="evidence" value="ECO:0007669"/>
    <property type="project" value="TreeGrafter"/>
</dbReference>
<dbReference type="GO" id="GO:0002098">
    <property type="term" value="P:tRNA wobble uridine modification"/>
    <property type="evidence" value="ECO:0007669"/>
    <property type="project" value="InterPro"/>
</dbReference>
<dbReference type="FunFam" id="1.10.10.1800:FF:000001">
    <property type="entry name" value="tRNA uridine 5-carboxymethylaminomethyl modification enzyme MnmG"/>
    <property type="match status" value="1"/>
</dbReference>
<dbReference type="FunFam" id="1.10.150.570:FF:000001">
    <property type="entry name" value="tRNA uridine 5-carboxymethylaminomethyl modification enzyme MnmG"/>
    <property type="match status" value="1"/>
</dbReference>
<dbReference type="FunFam" id="3.50.50.60:FF:000002">
    <property type="entry name" value="tRNA uridine 5-carboxymethylaminomethyl modification enzyme MnmG"/>
    <property type="match status" value="1"/>
</dbReference>
<dbReference type="FunFam" id="3.50.50.60:FF:000063">
    <property type="entry name" value="tRNA uridine 5-carboxymethylaminomethyl modification enzyme MnmG"/>
    <property type="match status" value="1"/>
</dbReference>
<dbReference type="Gene3D" id="3.50.50.60">
    <property type="entry name" value="FAD/NAD(P)-binding domain"/>
    <property type="match status" value="2"/>
</dbReference>
<dbReference type="Gene3D" id="1.10.150.570">
    <property type="entry name" value="GidA associated domain, C-terminal subdomain"/>
    <property type="match status" value="1"/>
</dbReference>
<dbReference type="Gene3D" id="1.10.10.1800">
    <property type="entry name" value="tRNA uridine 5-carboxymethylaminomethyl modification enzyme MnmG/GidA"/>
    <property type="match status" value="1"/>
</dbReference>
<dbReference type="HAMAP" id="MF_00129">
    <property type="entry name" value="MnmG_GidA"/>
    <property type="match status" value="1"/>
</dbReference>
<dbReference type="InterPro" id="IPR036188">
    <property type="entry name" value="FAD/NAD-bd_sf"/>
</dbReference>
<dbReference type="InterPro" id="IPR049312">
    <property type="entry name" value="GIDA_C_N"/>
</dbReference>
<dbReference type="InterPro" id="IPR004416">
    <property type="entry name" value="MnmG"/>
</dbReference>
<dbReference type="InterPro" id="IPR002218">
    <property type="entry name" value="MnmG-rel"/>
</dbReference>
<dbReference type="InterPro" id="IPR020595">
    <property type="entry name" value="MnmG-rel_CS"/>
</dbReference>
<dbReference type="InterPro" id="IPR026904">
    <property type="entry name" value="MnmG_C"/>
</dbReference>
<dbReference type="InterPro" id="IPR047001">
    <property type="entry name" value="MnmG_C_subdom"/>
</dbReference>
<dbReference type="InterPro" id="IPR044920">
    <property type="entry name" value="MnmG_C_subdom_sf"/>
</dbReference>
<dbReference type="InterPro" id="IPR040131">
    <property type="entry name" value="MnmG_N"/>
</dbReference>
<dbReference type="NCBIfam" id="TIGR00136">
    <property type="entry name" value="mnmG_gidA"/>
    <property type="match status" value="1"/>
</dbReference>
<dbReference type="PANTHER" id="PTHR11806">
    <property type="entry name" value="GLUCOSE INHIBITED DIVISION PROTEIN A"/>
    <property type="match status" value="1"/>
</dbReference>
<dbReference type="PANTHER" id="PTHR11806:SF0">
    <property type="entry name" value="PROTEIN MTO1 HOMOLOG, MITOCHONDRIAL"/>
    <property type="match status" value="1"/>
</dbReference>
<dbReference type="Pfam" id="PF01134">
    <property type="entry name" value="GIDA"/>
    <property type="match status" value="1"/>
</dbReference>
<dbReference type="Pfam" id="PF21680">
    <property type="entry name" value="GIDA_C_1st"/>
    <property type="match status" value="1"/>
</dbReference>
<dbReference type="Pfam" id="PF13932">
    <property type="entry name" value="SAM_GIDA_C"/>
    <property type="match status" value="1"/>
</dbReference>
<dbReference type="PRINTS" id="PR00411">
    <property type="entry name" value="PNDRDTASEI"/>
</dbReference>
<dbReference type="SMART" id="SM01228">
    <property type="entry name" value="GIDA_assoc_3"/>
    <property type="match status" value="1"/>
</dbReference>
<dbReference type="SUPFAM" id="SSF51905">
    <property type="entry name" value="FAD/NAD(P)-binding domain"/>
    <property type="match status" value="1"/>
</dbReference>
<dbReference type="PROSITE" id="PS01280">
    <property type="entry name" value="GIDA_1"/>
    <property type="match status" value="1"/>
</dbReference>
<dbReference type="PROSITE" id="PS01281">
    <property type="entry name" value="GIDA_2"/>
    <property type="match status" value="1"/>
</dbReference>
<accession>Q5X9C2</accession>
<evidence type="ECO:0000255" key="1">
    <source>
        <dbReference type="HAMAP-Rule" id="MF_00129"/>
    </source>
</evidence>
<proteinExistence type="inferred from homology"/>
<gene>
    <name evidence="1" type="primary">mnmG</name>
    <name evidence="1" type="synonym">gidA</name>
    <name type="ordered locus">M6_Spy1856</name>
</gene>
<organism>
    <name type="scientific">Streptococcus pyogenes serotype M6 (strain ATCC BAA-946 / MGAS10394)</name>
    <dbReference type="NCBI Taxonomy" id="286636"/>
    <lineage>
        <taxon>Bacteria</taxon>
        <taxon>Bacillati</taxon>
        <taxon>Bacillota</taxon>
        <taxon>Bacilli</taxon>
        <taxon>Lactobacillales</taxon>
        <taxon>Streptococcaceae</taxon>
        <taxon>Streptococcus</taxon>
    </lineage>
</organism>
<name>MNMG_STRP6</name>
<reference key="1">
    <citation type="journal article" date="2004" name="J. Infect. Dis.">
        <title>Progress toward characterization of the group A Streptococcus metagenome: complete genome sequence of a macrolide-resistant serotype M6 strain.</title>
        <authorList>
            <person name="Banks D.J."/>
            <person name="Porcella S.F."/>
            <person name="Barbian K.D."/>
            <person name="Beres S.B."/>
            <person name="Philips L.E."/>
            <person name="Voyich J.M."/>
            <person name="DeLeo F.R."/>
            <person name="Martin J.M."/>
            <person name="Somerville G.A."/>
            <person name="Musser J.M."/>
        </authorList>
    </citation>
    <scope>NUCLEOTIDE SEQUENCE [LARGE SCALE GENOMIC DNA]</scope>
    <source>
        <strain>ATCC BAA-946 / MGAS10394</strain>
    </source>
</reference>
<protein>
    <recommendedName>
        <fullName evidence="1">tRNA uridine 5-carboxymethylaminomethyl modification enzyme MnmG</fullName>
    </recommendedName>
    <alternativeName>
        <fullName evidence="1">Glucose-inhibited division protein A</fullName>
    </alternativeName>
</protein>
<feature type="chain" id="PRO_0000117192" description="tRNA uridine 5-carboxymethylaminomethyl modification enzyme MnmG">
    <location>
        <begin position="1"/>
        <end position="632"/>
    </location>
</feature>
<feature type="binding site" evidence="1">
    <location>
        <begin position="15"/>
        <end position="20"/>
    </location>
    <ligand>
        <name>FAD</name>
        <dbReference type="ChEBI" id="CHEBI:57692"/>
    </ligand>
</feature>
<feature type="binding site" evidence="1">
    <location>
        <position position="127"/>
    </location>
    <ligand>
        <name>FAD</name>
        <dbReference type="ChEBI" id="CHEBI:57692"/>
    </ligand>
</feature>
<feature type="binding site" evidence="1">
    <location>
        <position position="182"/>
    </location>
    <ligand>
        <name>FAD</name>
        <dbReference type="ChEBI" id="CHEBI:57692"/>
    </ligand>
</feature>
<feature type="binding site" evidence="1">
    <location>
        <begin position="276"/>
        <end position="290"/>
    </location>
    <ligand>
        <name>NAD(+)</name>
        <dbReference type="ChEBI" id="CHEBI:57540"/>
    </ligand>
</feature>
<feature type="binding site" evidence="1">
    <location>
        <position position="373"/>
    </location>
    <ligand>
        <name>FAD</name>
        <dbReference type="ChEBI" id="CHEBI:57692"/>
    </ligand>
</feature>